<dbReference type="EC" id="2.1.1.72"/>
<dbReference type="EMBL" id="U77781">
    <property type="protein sequence ID" value="AAD13686.1"/>
    <property type="molecule type" value="Genomic_DNA"/>
</dbReference>
<dbReference type="SMR" id="P96188"/>
<dbReference type="REBASE" id="3526">
    <property type="entry name" value="M.XamI"/>
</dbReference>
<dbReference type="PRO" id="PR:P96188"/>
<dbReference type="GO" id="GO:0003677">
    <property type="term" value="F:DNA binding"/>
    <property type="evidence" value="ECO:0007669"/>
    <property type="project" value="UniProtKB-KW"/>
</dbReference>
<dbReference type="GO" id="GO:0009007">
    <property type="term" value="F:site-specific DNA-methyltransferase (adenine-specific) activity"/>
    <property type="evidence" value="ECO:0007669"/>
    <property type="project" value="UniProtKB-EC"/>
</dbReference>
<dbReference type="GO" id="GO:0009307">
    <property type="term" value="P:DNA restriction-modification system"/>
    <property type="evidence" value="ECO:0007669"/>
    <property type="project" value="UniProtKB-KW"/>
</dbReference>
<dbReference type="GO" id="GO:0032259">
    <property type="term" value="P:methylation"/>
    <property type="evidence" value="ECO:0007669"/>
    <property type="project" value="UniProtKB-KW"/>
</dbReference>
<dbReference type="CDD" id="cd02440">
    <property type="entry name" value="AdoMet_MTases"/>
    <property type="match status" value="1"/>
</dbReference>
<dbReference type="Gene3D" id="3.40.50.150">
    <property type="entry name" value="Vaccinia Virus protein VP39"/>
    <property type="match status" value="1"/>
</dbReference>
<dbReference type="InterPro" id="IPR011639">
    <property type="entry name" value="MethylTrfase_TaqI-like_dom"/>
</dbReference>
<dbReference type="InterPro" id="IPR050953">
    <property type="entry name" value="N4_N6_ade-DNA_methylase"/>
</dbReference>
<dbReference type="InterPro" id="IPR029063">
    <property type="entry name" value="SAM-dependent_MTases_sf"/>
</dbReference>
<dbReference type="PANTHER" id="PTHR33841:SF5">
    <property type="entry name" value="DNA METHYLASE (MODIFICATION METHYLASE) (METHYLTRANSFERASE)-RELATED"/>
    <property type="match status" value="1"/>
</dbReference>
<dbReference type="PANTHER" id="PTHR33841">
    <property type="entry name" value="DNA METHYLTRANSFERASE YEEA-RELATED"/>
    <property type="match status" value="1"/>
</dbReference>
<dbReference type="Pfam" id="PF07669">
    <property type="entry name" value="Eco57I"/>
    <property type="match status" value="1"/>
</dbReference>
<dbReference type="PRINTS" id="PR00507">
    <property type="entry name" value="N12N6MTFRASE"/>
</dbReference>
<dbReference type="SUPFAM" id="SSF53335">
    <property type="entry name" value="S-adenosyl-L-methionine-dependent methyltransferases"/>
    <property type="match status" value="1"/>
</dbReference>
<feature type="chain" id="PRO_0000087983" description="Type II methyltransferase M.XamI">
    <location>
        <begin position="1"/>
        <end position="527"/>
    </location>
</feature>
<reference key="1">
    <citation type="journal article" date="1997" name="Biochim. Biophys. Acta">
        <title>Isolation and nucleotide sequence of the gene encoding the XamI DNA methyltransferase of Xanthomonas campestris pv. amaranthicola.</title>
        <authorList>
            <person name="Gomez P."/>
            <person name="Ribas-Aparicio R.M."/>
            <person name="Pelaez A.I."/>
            <person name="Gomez A."/>
            <person name="Rodicio M.R."/>
        </authorList>
    </citation>
    <scope>NUCLEOTIDE SEQUENCE [GENOMIC DNA]</scope>
    <scope>FUNCTION</scope>
    <source>
        <strain>ATCC 11645 / LMG 498 / NCPPB 570</strain>
    </source>
</reference>
<reference key="2">
    <citation type="journal article" date="2003" name="Nucleic Acids Res.">
        <title>A nomenclature for restriction enzymes, DNA methyltransferases, homing endonucleases and their genes.</title>
        <authorList>
            <person name="Roberts R.J."/>
            <person name="Belfort M."/>
            <person name="Bestor T."/>
            <person name="Bhagwat A.S."/>
            <person name="Bickle T.A."/>
            <person name="Bitinaite J."/>
            <person name="Blumenthal R.M."/>
            <person name="Degtyarev S.K."/>
            <person name="Dryden D.T."/>
            <person name="Dybvig K."/>
            <person name="Firman K."/>
            <person name="Gromova E.S."/>
            <person name="Gumport R.I."/>
            <person name="Halford S.E."/>
            <person name="Hattman S."/>
            <person name="Heitman J."/>
            <person name="Hornby D.P."/>
            <person name="Janulaitis A."/>
            <person name="Jeltsch A."/>
            <person name="Josephsen J."/>
            <person name="Kiss A."/>
            <person name="Klaenhammer T.R."/>
            <person name="Kobayashi I."/>
            <person name="Kong H."/>
            <person name="Krueger D.H."/>
            <person name="Lacks S."/>
            <person name="Marinus M.G."/>
            <person name="Miyahara M."/>
            <person name="Morgan R.D."/>
            <person name="Murray N.E."/>
            <person name="Nagaraja V."/>
            <person name="Piekarowicz A."/>
            <person name="Pingoud A."/>
            <person name="Raleigh E."/>
            <person name="Rao D.N."/>
            <person name="Reich N."/>
            <person name="Repin V.E."/>
            <person name="Selker E.U."/>
            <person name="Shaw P.C."/>
            <person name="Stein D.C."/>
            <person name="Stoddard B.L."/>
            <person name="Szybalski W."/>
            <person name="Trautner T.A."/>
            <person name="Van Etten J.L."/>
            <person name="Vitor J.M."/>
            <person name="Wilson G.G."/>
            <person name="Xu S.Y."/>
        </authorList>
    </citation>
    <scope>NOMENCLATURE</scope>
    <scope>SUBTYPE</scope>
</reference>
<name>MTX1_XANCR</name>
<evidence type="ECO:0000303" key="1">
    <source>
    </source>
</evidence>
<evidence type="ECO:0000303" key="2">
    <source>
    </source>
</evidence>
<evidence type="ECO:0000305" key="3"/>
<evidence type="ECO:0000305" key="4">
    <source>
    </source>
</evidence>
<accession>P96188</accession>
<gene>
    <name evidence="2" type="primary">xamIM</name>
</gene>
<comment type="function">
    <text evidence="1 4">A gamma subtype methylase that recognizes the double-stranded sequence 5'-GTCGAC-3', possibly methylates A-5 on both strands, and protects the DNA from cleavage by the XamI endonuclease.</text>
</comment>
<comment type="catalytic activity">
    <reaction>
        <text>a 2'-deoxyadenosine in DNA + S-adenosyl-L-methionine = an N(6)-methyl-2'-deoxyadenosine in DNA + S-adenosyl-L-homocysteine + H(+)</text>
        <dbReference type="Rhea" id="RHEA:15197"/>
        <dbReference type="Rhea" id="RHEA-COMP:12418"/>
        <dbReference type="Rhea" id="RHEA-COMP:12419"/>
        <dbReference type="ChEBI" id="CHEBI:15378"/>
        <dbReference type="ChEBI" id="CHEBI:57856"/>
        <dbReference type="ChEBI" id="CHEBI:59789"/>
        <dbReference type="ChEBI" id="CHEBI:90615"/>
        <dbReference type="ChEBI" id="CHEBI:90616"/>
        <dbReference type="EC" id="2.1.1.72"/>
    </reaction>
</comment>
<comment type="similarity">
    <text evidence="3">Belongs to the N(4)/N(6)-methyltransferase family.</text>
</comment>
<sequence length="527" mass="57535">MSMQTEQELVALCLALIKDQDSLSAAEKKLTKTTPVSALKPREIDTIRKRSRAGLTHSANVLFDPLGHRAPRAGAVYTPAPIVRSMMTWLAAQGSPARIVDPGAGSGRFILAAGEAFPDAQLVAVEMDPLAALMLRANLSARGWTDRATVMVKDYREVKLPPCAGITAFIGNPPYVRHHDIGEDWKAWYASNFAGYGIKASALAGLHLHFFLQTRLLAKAGDVGAFITSAEWMDVNYGSALRRLLLDELGGIALHVLEPTVEAFPGTATTAAIACFRVGETARPVRVRFIDELTNLNGLTKGTDIPREQLQAASRWSIIVRPSAPAMAGDIELGELFRVHRGQVTGANGIWIAGEHAQGLPDRVKMPAVTKAKDLIQAGAHLNSAEVLRRVIDLPTDLDDFTKEERRRISSFLSWAKLHGADQSYIAQHRRAWWSVGLKAPAPILCTYMARRPPQFTLNACDARHINIAHGLYPREPLAAGIMASLVTWLNKNINTGSGRTYAGGLTKFEPKEIERLRIPSLENLHA</sequence>
<organism>
    <name type="scientific">Xanthomonas campestris pv. amaranthicola</name>
    <dbReference type="NCBI Taxonomy" id="54735"/>
    <lineage>
        <taxon>Bacteria</taxon>
        <taxon>Pseudomonadati</taxon>
        <taxon>Pseudomonadota</taxon>
        <taxon>Gammaproteobacteria</taxon>
        <taxon>Lysobacterales</taxon>
        <taxon>Lysobacteraceae</taxon>
        <taxon>Xanthomonas</taxon>
    </lineage>
</organism>
<proteinExistence type="inferred from homology"/>
<protein>
    <recommendedName>
        <fullName evidence="1">Type II methyltransferase M.XamI</fullName>
        <shortName evidence="2">M.XamI</shortName>
        <ecNumber>2.1.1.72</ecNumber>
    </recommendedName>
    <alternativeName>
        <fullName>Adenine-specific methyltransferase XamI</fullName>
    </alternativeName>
    <alternativeName>
        <fullName>Modification methylase XamI</fullName>
    </alternativeName>
</protein>
<keyword id="KW-0238">DNA-binding</keyword>
<keyword id="KW-0489">Methyltransferase</keyword>
<keyword id="KW-0680">Restriction system</keyword>
<keyword id="KW-0949">S-adenosyl-L-methionine</keyword>
<keyword id="KW-0808">Transferase</keyword>